<organism>
    <name type="scientific">Arabidopsis thaliana</name>
    <name type="common">Mouse-ear cress</name>
    <dbReference type="NCBI Taxonomy" id="3702"/>
    <lineage>
        <taxon>Eukaryota</taxon>
        <taxon>Viridiplantae</taxon>
        <taxon>Streptophyta</taxon>
        <taxon>Embryophyta</taxon>
        <taxon>Tracheophyta</taxon>
        <taxon>Spermatophyta</taxon>
        <taxon>Magnoliopsida</taxon>
        <taxon>eudicotyledons</taxon>
        <taxon>Gunneridae</taxon>
        <taxon>Pentapetalae</taxon>
        <taxon>rosids</taxon>
        <taxon>malvids</taxon>
        <taxon>Brassicales</taxon>
        <taxon>Brassicaceae</taxon>
        <taxon>Camelineae</taxon>
        <taxon>Arabidopsis</taxon>
    </lineage>
</organism>
<name>U2AFB_ARATH</name>
<comment type="function">
    <text evidence="1">Necessary for the splicing of pre-mRNA (By similarity). Probably active at the 3' splice sites.</text>
</comment>
<comment type="subunit">
    <text evidence="6">Component of the spliceosome. Homo- and heterodimer. Interacts with RNU1, U2AF35A and SR45.</text>
</comment>
<comment type="interaction">
    <interactant intactId="EBI-4448718">
        <id>Q9FMY5</id>
    </interactant>
    <interactant intactId="EBI-15193049">
        <id>O23090</id>
        <label>BHLH14</label>
    </interactant>
    <organismsDiffer>false</organismsDiffer>
    <experiments>3</experiments>
</comment>
<comment type="subcellular location">
    <subcellularLocation>
        <location evidence="5 6">Nucleus speckle</location>
    </subcellularLocation>
</comment>
<comment type="similarity">
    <text evidence="7">Belongs to the splicing factor SR family.</text>
</comment>
<accession>Q9FMY5</accession>
<accession>Q945S0</accession>
<reference key="1">
    <citation type="journal article" date="2006" name="Plant Physiol.">
        <title>Molecular characterization and phylogeny of U2AF35 homologs in plants.</title>
        <authorList>
            <person name="Wang B.-B."/>
            <person name="Brendel V."/>
        </authorList>
    </citation>
    <scope>NUCLEOTIDE SEQUENCE [MRNA]</scope>
    <scope>SUBCELLULAR LOCATION</scope>
    <source>
        <strain>cv. Columbia</strain>
        <tissue>Leaf</tissue>
    </source>
</reference>
<reference key="2">
    <citation type="journal article" date="1997" name="DNA Res.">
        <title>Structural analysis of Arabidopsis thaliana chromosome 5. III. Sequence features of the regions of 1,191,918 bp covered by seventeen physically assigned P1 clones.</title>
        <authorList>
            <person name="Nakamura Y."/>
            <person name="Sato S."/>
            <person name="Kaneko T."/>
            <person name="Kotani H."/>
            <person name="Asamizu E."/>
            <person name="Miyajima N."/>
            <person name="Tabata S."/>
        </authorList>
    </citation>
    <scope>NUCLEOTIDE SEQUENCE [LARGE SCALE GENOMIC DNA]</scope>
    <source>
        <strain>cv. Columbia</strain>
    </source>
</reference>
<reference key="3">
    <citation type="journal article" date="2017" name="Plant J.">
        <title>Araport11: a complete reannotation of the Arabidopsis thaliana reference genome.</title>
        <authorList>
            <person name="Cheng C.Y."/>
            <person name="Krishnakumar V."/>
            <person name="Chan A.P."/>
            <person name="Thibaud-Nissen F."/>
            <person name="Schobel S."/>
            <person name="Town C.D."/>
        </authorList>
    </citation>
    <scope>GENOME REANNOTATION</scope>
    <source>
        <strain>cv. Columbia</strain>
    </source>
</reference>
<reference key="4">
    <citation type="journal article" date="2003" name="Science">
        <title>Empirical analysis of transcriptional activity in the Arabidopsis genome.</title>
        <authorList>
            <person name="Yamada K."/>
            <person name="Lim J."/>
            <person name="Dale J.M."/>
            <person name="Chen H."/>
            <person name="Shinn P."/>
            <person name="Palm C.J."/>
            <person name="Southwick A.M."/>
            <person name="Wu H.C."/>
            <person name="Kim C.J."/>
            <person name="Nguyen M."/>
            <person name="Pham P.K."/>
            <person name="Cheuk R.F."/>
            <person name="Karlin-Newmann G."/>
            <person name="Liu S.X."/>
            <person name="Lam B."/>
            <person name="Sakano H."/>
            <person name="Wu T."/>
            <person name="Yu G."/>
            <person name="Miranda M."/>
            <person name="Quach H.L."/>
            <person name="Tripp M."/>
            <person name="Chang C.H."/>
            <person name="Lee J.M."/>
            <person name="Toriumi M.J."/>
            <person name="Chan M.M."/>
            <person name="Tang C.C."/>
            <person name="Onodera C.S."/>
            <person name="Deng J.M."/>
            <person name="Akiyama K."/>
            <person name="Ansari Y."/>
            <person name="Arakawa T."/>
            <person name="Banh J."/>
            <person name="Banno F."/>
            <person name="Bowser L."/>
            <person name="Brooks S.Y."/>
            <person name="Carninci P."/>
            <person name="Chao Q."/>
            <person name="Choy N."/>
            <person name="Enju A."/>
            <person name="Goldsmith A.D."/>
            <person name="Gurjal M."/>
            <person name="Hansen N.F."/>
            <person name="Hayashizaki Y."/>
            <person name="Johnson-Hopson C."/>
            <person name="Hsuan V.W."/>
            <person name="Iida K."/>
            <person name="Karnes M."/>
            <person name="Khan S."/>
            <person name="Koesema E."/>
            <person name="Ishida J."/>
            <person name="Jiang P.X."/>
            <person name="Jones T."/>
            <person name="Kawai J."/>
            <person name="Kamiya A."/>
            <person name="Meyers C."/>
            <person name="Nakajima M."/>
            <person name="Narusaka M."/>
            <person name="Seki M."/>
            <person name="Sakurai T."/>
            <person name="Satou M."/>
            <person name="Tamse R."/>
            <person name="Vaysberg M."/>
            <person name="Wallender E.K."/>
            <person name="Wong C."/>
            <person name="Yamamura Y."/>
            <person name="Yuan S."/>
            <person name="Shinozaki K."/>
            <person name="Davis R.W."/>
            <person name="Theologis A."/>
            <person name="Ecker J.R."/>
        </authorList>
    </citation>
    <scope>NUCLEOTIDE SEQUENCE [LARGE SCALE MRNA]</scope>
    <source>
        <strain>cv. Columbia</strain>
    </source>
</reference>
<reference key="5">
    <citation type="journal article" date="2008" name="BMC Genomics">
        <title>Genome-wide analysis of CCCH zinc finger family in Arabidopsis and rice.</title>
        <authorList>
            <person name="Wang D."/>
            <person name="Guo Y."/>
            <person name="Wu C."/>
            <person name="Yang G."/>
            <person name="Li Y."/>
            <person name="Zheng C."/>
        </authorList>
    </citation>
    <scope>NOMENCLATURE</scope>
</reference>
<reference key="6">
    <citation type="journal article" date="2012" name="Plant J.">
        <title>Interactions of SR45, an SR-like protein, with spliceosomal proteins and an intronic sequence: insights into regulated splicing.</title>
        <authorList>
            <person name="Day I.S."/>
            <person name="Golovkin M."/>
            <person name="Palusa S.G."/>
            <person name="Link A."/>
            <person name="Ali G.S."/>
            <person name="Thomas J."/>
            <person name="Richardson D.N."/>
            <person name="Reddy A.S."/>
        </authorList>
    </citation>
    <scope>INTERACTION WITH RNU1; SR45 AND U2AF35A</scope>
    <scope>SUBCELLULAR LOCATION</scope>
</reference>
<gene>
    <name type="primary">U2AF35B</name>
    <name type="synonym">AUSB</name>
    <name type="ordered locus">At5g42820</name>
    <name type="ORF">MJB21.20</name>
</gene>
<keyword id="KW-0238">DNA-binding</keyword>
<keyword id="KW-0479">Metal-binding</keyword>
<keyword id="KW-0507">mRNA processing</keyword>
<keyword id="KW-0508">mRNA splicing</keyword>
<keyword id="KW-0539">Nucleus</keyword>
<keyword id="KW-1185">Reference proteome</keyword>
<keyword id="KW-0677">Repeat</keyword>
<keyword id="KW-0694">RNA-binding</keyword>
<keyword id="KW-0747">Spliceosome</keyword>
<keyword id="KW-0862">Zinc</keyword>
<keyword id="KW-0863">Zinc-finger</keyword>
<feature type="chain" id="PRO_0000371962" description="Splicing factor U2af small subunit B">
    <location>
        <begin position="1"/>
        <end position="283"/>
    </location>
</feature>
<feature type="domain" description="RRM" evidence="2">
    <location>
        <begin position="44"/>
        <end position="146"/>
    </location>
</feature>
<feature type="zinc finger region" description="C3H1-type 1" evidence="3">
    <location>
        <begin position="12"/>
        <end position="40"/>
    </location>
</feature>
<feature type="zinc finger region" description="C3H1-type 2" evidence="3">
    <location>
        <begin position="148"/>
        <end position="175"/>
    </location>
</feature>
<feature type="region of interest" description="Disordered" evidence="4">
    <location>
        <begin position="191"/>
        <end position="283"/>
    </location>
</feature>
<feature type="compositionally biased region" description="Basic residues" evidence="4">
    <location>
        <begin position="191"/>
        <end position="210"/>
    </location>
</feature>
<feature type="compositionally biased region" description="Basic and acidic residues" evidence="4">
    <location>
        <begin position="211"/>
        <end position="245"/>
    </location>
</feature>
<feature type="compositionally biased region" description="Basic residues" evidence="4">
    <location>
        <begin position="246"/>
        <end position="259"/>
    </location>
</feature>
<feature type="compositionally biased region" description="Basic and acidic residues" evidence="4">
    <location>
        <begin position="260"/>
        <end position="283"/>
    </location>
</feature>
<feature type="sequence conflict" description="In Ref. 1; AAL06332." evidence="7" ref="1">
    <original>D</original>
    <variation>V</variation>
    <location>
        <position position="102"/>
    </location>
</feature>
<feature type="sequence conflict" description="In Ref. 1; AAL06332." evidence="7" ref="1">
    <original>Y</original>
    <variation>C</variation>
    <location>
        <position position="167"/>
    </location>
</feature>
<feature type="sequence conflict" description="In Ref. 1; AAL06332." evidence="7" ref="1">
    <original>H</original>
    <variation>Y</variation>
    <location>
        <position position="239"/>
    </location>
</feature>
<evidence type="ECO:0000250" key="1"/>
<evidence type="ECO:0000255" key="2">
    <source>
        <dbReference type="PROSITE-ProRule" id="PRU00176"/>
    </source>
</evidence>
<evidence type="ECO:0000255" key="3">
    <source>
        <dbReference type="PROSITE-ProRule" id="PRU00723"/>
    </source>
</evidence>
<evidence type="ECO:0000256" key="4">
    <source>
        <dbReference type="SAM" id="MobiDB-lite"/>
    </source>
</evidence>
<evidence type="ECO:0000269" key="5">
    <source>
    </source>
</evidence>
<evidence type="ECO:0000269" key="6">
    <source>
    </source>
</evidence>
<evidence type="ECO:0000305" key="7"/>
<dbReference type="EMBL" id="AF409140">
    <property type="protein sequence ID" value="AAL06332.1"/>
    <property type="molecule type" value="mRNA"/>
</dbReference>
<dbReference type="EMBL" id="AB007647">
    <property type="protein sequence ID" value="BAB10638.1"/>
    <property type="molecule type" value="Genomic_DNA"/>
</dbReference>
<dbReference type="EMBL" id="AB008264">
    <property type="protein sequence ID" value="BAB10638.1"/>
    <property type="status" value="JOINED"/>
    <property type="molecule type" value="Genomic_DNA"/>
</dbReference>
<dbReference type="EMBL" id="CP002688">
    <property type="protein sequence ID" value="AED94868.1"/>
    <property type="molecule type" value="Genomic_DNA"/>
</dbReference>
<dbReference type="EMBL" id="CP002688">
    <property type="protein sequence ID" value="AED94869.1"/>
    <property type="molecule type" value="Genomic_DNA"/>
</dbReference>
<dbReference type="EMBL" id="AY136436">
    <property type="protein sequence ID" value="AAM97101.1"/>
    <property type="molecule type" value="mRNA"/>
</dbReference>
<dbReference type="EMBL" id="BT000219">
    <property type="protein sequence ID" value="AAN15538.1"/>
    <property type="molecule type" value="mRNA"/>
</dbReference>
<dbReference type="RefSeq" id="NP_199096.1">
    <property type="nucleotide sequence ID" value="NM_123647.3"/>
</dbReference>
<dbReference type="RefSeq" id="NP_974870.1">
    <property type="nucleotide sequence ID" value="NM_203141.2"/>
</dbReference>
<dbReference type="SMR" id="Q9FMY5"/>
<dbReference type="BioGRID" id="19543">
    <property type="interactions" value="14"/>
</dbReference>
<dbReference type="FunCoup" id="Q9FMY5">
    <property type="interactions" value="3566"/>
</dbReference>
<dbReference type="IntAct" id="Q9FMY5">
    <property type="interactions" value="9"/>
</dbReference>
<dbReference type="STRING" id="3702.Q9FMY5"/>
<dbReference type="iPTMnet" id="Q9FMY5"/>
<dbReference type="PaxDb" id="3702-AT5G42820.2"/>
<dbReference type="ProteomicsDB" id="243233"/>
<dbReference type="EnsemblPlants" id="AT5G42820.1">
    <property type="protein sequence ID" value="AT5G42820.1"/>
    <property type="gene ID" value="AT5G42820"/>
</dbReference>
<dbReference type="EnsemblPlants" id="AT5G42820.2">
    <property type="protein sequence ID" value="AT5G42820.2"/>
    <property type="gene ID" value="AT5G42820"/>
</dbReference>
<dbReference type="GeneID" id="834293"/>
<dbReference type="Gramene" id="AT5G42820.1">
    <property type="protein sequence ID" value="AT5G42820.1"/>
    <property type="gene ID" value="AT5G42820"/>
</dbReference>
<dbReference type="Gramene" id="AT5G42820.2">
    <property type="protein sequence ID" value="AT5G42820.2"/>
    <property type="gene ID" value="AT5G42820"/>
</dbReference>
<dbReference type="KEGG" id="ath:AT5G42820"/>
<dbReference type="Araport" id="AT5G42820"/>
<dbReference type="TAIR" id="AT5G42820">
    <property type="gene designation" value="U2AF35B"/>
</dbReference>
<dbReference type="eggNOG" id="KOG2202">
    <property type="taxonomic scope" value="Eukaryota"/>
</dbReference>
<dbReference type="HOGENOM" id="CLU_059852_2_1_1"/>
<dbReference type="InParanoid" id="Q9FMY5"/>
<dbReference type="OMA" id="MIDTRQA"/>
<dbReference type="OrthoDB" id="423462at2759"/>
<dbReference type="PhylomeDB" id="Q9FMY5"/>
<dbReference type="PRO" id="PR:Q9FMY5"/>
<dbReference type="Proteomes" id="UP000006548">
    <property type="component" value="Chromosome 5"/>
</dbReference>
<dbReference type="ExpressionAtlas" id="Q9FMY5">
    <property type="expression patterns" value="baseline and differential"/>
</dbReference>
<dbReference type="GO" id="GO:0016607">
    <property type="term" value="C:nuclear speck"/>
    <property type="evidence" value="ECO:0007669"/>
    <property type="project" value="UniProtKB-SubCell"/>
</dbReference>
<dbReference type="GO" id="GO:0005634">
    <property type="term" value="C:nucleus"/>
    <property type="evidence" value="ECO:0000314"/>
    <property type="project" value="TAIR"/>
</dbReference>
<dbReference type="GO" id="GO:0005681">
    <property type="term" value="C:spliceosomal complex"/>
    <property type="evidence" value="ECO:0007669"/>
    <property type="project" value="UniProtKB-KW"/>
</dbReference>
<dbReference type="GO" id="GO:0089701">
    <property type="term" value="C:U2AF complex"/>
    <property type="evidence" value="ECO:0007669"/>
    <property type="project" value="InterPro"/>
</dbReference>
<dbReference type="GO" id="GO:0003677">
    <property type="term" value="F:DNA binding"/>
    <property type="evidence" value="ECO:0007669"/>
    <property type="project" value="UniProtKB-KW"/>
</dbReference>
<dbReference type="GO" id="GO:0003723">
    <property type="term" value="F:RNA binding"/>
    <property type="evidence" value="ECO:0007669"/>
    <property type="project" value="UniProtKB-KW"/>
</dbReference>
<dbReference type="GO" id="GO:0008270">
    <property type="term" value="F:zinc ion binding"/>
    <property type="evidence" value="ECO:0007669"/>
    <property type="project" value="UniProtKB-KW"/>
</dbReference>
<dbReference type="GO" id="GO:0000398">
    <property type="term" value="P:mRNA splicing, via spliceosome"/>
    <property type="evidence" value="ECO:0007669"/>
    <property type="project" value="InterPro"/>
</dbReference>
<dbReference type="GO" id="GO:0048573">
    <property type="term" value="P:photoperiodism, flowering"/>
    <property type="evidence" value="ECO:0000315"/>
    <property type="project" value="TAIR"/>
</dbReference>
<dbReference type="CDD" id="cd12539">
    <property type="entry name" value="RRM_U2AF35B"/>
    <property type="match status" value="1"/>
</dbReference>
<dbReference type="FunFam" id="3.30.70.330:FF:000122">
    <property type="entry name" value="Splicing factor U2AF small subunit"/>
    <property type="match status" value="1"/>
</dbReference>
<dbReference type="Gene3D" id="3.30.70.330">
    <property type="match status" value="1"/>
</dbReference>
<dbReference type="InterPro" id="IPR012677">
    <property type="entry name" value="Nucleotide-bd_a/b_plait_sf"/>
</dbReference>
<dbReference type="InterPro" id="IPR035979">
    <property type="entry name" value="RBD_domain_sf"/>
</dbReference>
<dbReference type="InterPro" id="IPR000504">
    <property type="entry name" value="RRM_dom"/>
</dbReference>
<dbReference type="InterPro" id="IPR003954">
    <property type="entry name" value="RRM_dom_euk"/>
</dbReference>
<dbReference type="InterPro" id="IPR009145">
    <property type="entry name" value="U2AF_small"/>
</dbReference>
<dbReference type="InterPro" id="IPR000571">
    <property type="entry name" value="Znf_CCCH"/>
</dbReference>
<dbReference type="PANTHER" id="PTHR12620">
    <property type="entry name" value="U2 SNRNP AUXILIARY FACTOR, SMALL SUBUNIT"/>
    <property type="match status" value="1"/>
</dbReference>
<dbReference type="Pfam" id="PF00076">
    <property type="entry name" value="RRM_1"/>
    <property type="match status" value="1"/>
</dbReference>
<dbReference type="Pfam" id="PF00642">
    <property type="entry name" value="zf-CCCH"/>
    <property type="match status" value="2"/>
</dbReference>
<dbReference type="PRINTS" id="PR01848">
    <property type="entry name" value="U2AUXFACTOR"/>
</dbReference>
<dbReference type="SMART" id="SM00361">
    <property type="entry name" value="RRM_1"/>
    <property type="match status" value="1"/>
</dbReference>
<dbReference type="SMART" id="SM00356">
    <property type="entry name" value="ZnF_C3H1"/>
    <property type="match status" value="2"/>
</dbReference>
<dbReference type="SUPFAM" id="SSF54928">
    <property type="entry name" value="RNA-binding domain, RBD"/>
    <property type="match status" value="1"/>
</dbReference>
<dbReference type="PROSITE" id="PS50102">
    <property type="entry name" value="RRM"/>
    <property type="match status" value="1"/>
</dbReference>
<dbReference type="PROSITE" id="PS50103">
    <property type="entry name" value="ZF_C3H1"/>
    <property type="match status" value="2"/>
</dbReference>
<protein>
    <recommendedName>
        <fullName>Splicing factor U2af small subunit B</fullName>
    </recommendedName>
    <alternativeName>
        <fullName>U2 auxiliary factor 35 kDa subunit B</fullName>
    </alternativeName>
    <alternativeName>
        <fullName>U2 small nuclear ribonucleoprotein auxiliary factor small subunit B</fullName>
        <shortName>U2 snRNP auxiliary factor small subunit B</shortName>
    </alternativeName>
    <alternativeName>
        <fullName>Zinc finger CCCH domain-containing protein 60</fullName>
        <shortName>AtC3H60</shortName>
    </alternativeName>
</protein>
<proteinExistence type="evidence at protein level"/>
<sequence length="283" mass="33232">MAEHLASIFGTEKDRVNCPFYFKIGACRHGDRCSRLHNRPTISPTLLLSNMYQRPDMITPGVDPQGQPLDPSKIQDHFEDFYEDIFEELNKFGEVESLNVCDNLADHMIGNVYVLFKEEDHAAAALQALQGRFYSGRPIIADFSPVTDFREATCRQYEENSCNRGGYCNFMHVKQISRELRRKLFGRYRRSYRRGSRSRSRSISPRRKREHSRERERGDVRDRDRHGNGKRSSDRSERHDRDGGGRRRHGSPKRSRSPRNVREGSEERRARIEQWNRERDEGV</sequence>